<organism>
    <name type="scientific">Escherichia coli O8 (strain IAI1)</name>
    <dbReference type="NCBI Taxonomy" id="585034"/>
    <lineage>
        <taxon>Bacteria</taxon>
        <taxon>Pseudomonadati</taxon>
        <taxon>Pseudomonadota</taxon>
        <taxon>Gammaproteobacteria</taxon>
        <taxon>Enterobacterales</taxon>
        <taxon>Enterobacteriaceae</taxon>
        <taxon>Escherichia</taxon>
    </lineage>
</organism>
<gene>
    <name evidence="1" type="primary">def</name>
    <name type="ordered locus">ECIAI1_3436</name>
</gene>
<comment type="function">
    <text evidence="1">Removes the formyl group from the N-terminal Met of newly synthesized proteins. Requires at least a dipeptide for an efficient rate of reaction. N-terminal L-methionine is a prerequisite for activity but the enzyme has broad specificity at other positions.</text>
</comment>
<comment type="catalytic activity">
    <reaction evidence="1">
        <text>N-terminal N-formyl-L-methionyl-[peptide] + H2O = N-terminal L-methionyl-[peptide] + formate</text>
        <dbReference type="Rhea" id="RHEA:24420"/>
        <dbReference type="Rhea" id="RHEA-COMP:10639"/>
        <dbReference type="Rhea" id="RHEA-COMP:10640"/>
        <dbReference type="ChEBI" id="CHEBI:15377"/>
        <dbReference type="ChEBI" id="CHEBI:15740"/>
        <dbReference type="ChEBI" id="CHEBI:49298"/>
        <dbReference type="ChEBI" id="CHEBI:64731"/>
        <dbReference type="EC" id="3.5.1.88"/>
    </reaction>
</comment>
<comment type="cofactor">
    <cofactor evidence="1">
        <name>Fe(2+)</name>
        <dbReference type="ChEBI" id="CHEBI:29033"/>
    </cofactor>
    <text evidence="1">Binds 1 Fe(2+) ion.</text>
</comment>
<comment type="similarity">
    <text evidence="1">Belongs to the polypeptide deformylase family.</text>
</comment>
<protein>
    <recommendedName>
        <fullName evidence="1">Peptide deformylase</fullName>
        <shortName evidence="1">PDF</shortName>
        <ecNumber evidence="1">3.5.1.88</ecNumber>
    </recommendedName>
    <alternativeName>
        <fullName evidence="1">Polypeptide deformylase</fullName>
    </alternativeName>
</protein>
<feature type="chain" id="PRO_1000200732" description="Peptide deformylase">
    <location>
        <begin position="1"/>
        <end position="169"/>
    </location>
</feature>
<feature type="active site" evidence="1">
    <location>
        <position position="134"/>
    </location>
</feature>
<feature type="binding site" evidence="1">
    <location>
        <position position="91"/>
    </location>
    <ligand>
        <name>Fe cation</name>
        <dbReference type="ChEBI" id="CHEBI:24875"/>
    </ligand>
</feature>
<feature type="binding site" evidence="1">
    <location>
        <position position="133"/>
    </location>
    <ligand>
        <name>Fe cation</name>
        <dbReference type="ChEBI" id="CHEBI:24875"/>
    </ligand>
</feature>
<feature type="binding site" evidence="1">
    <location>
        <position position="137"/>
    </location>
    <ligand>
        <name>Fe cation</name>
        <dbReference type="ChEBI" id="CHEBI:24875"/>
    </ligand>
</feature>
<name>DEF_ECO8A</name>
<keyword id="KW-0378">Hydrolase</keyword>
<keyword id="KW-0408">Iron</keyword>
<keyword id="KW-0479">Metal-binding</keyword>
<keyword id="KW-0648">Protein biosynthesis</keyword>
<accession>B7M0Z2</accession>
<dbReference type="EC" id="3.5.1.88" evidence="1"/>
<dbReference type="EMBL" id="CU928160">
    <property type="protein sequence ID" value="CAR00238.1"/>
    <property type="molecule type" value="Genomic_DNA"/>
</dbReference>
<dbReference type="RefSeq" id="WP_000114984.1">
    <property type="nucleotide sequence ID" value="NC_011741.1"/>
</dbReference>
<dbReference type="SMR" id="B7M0Z2"/>
<dbReference type="GeneID" id="89518132"/>
<dbReference type="KEGG" id="ecr:ECIAI1_3436"/>
<dbReference type="HOGENOM" id="CLU_061901_2_1_6"/>
<dbReference type="GO" id="GO:0046872">
    <property type="term" value="F:metal ion binding"/>
    <property type="evidence" value="ECO:0007669"/>
    <property type="project" value="UniProtKB-KW"/>
</dbReference>
<dbReference type="GO" id="GO:0042586">
    <property type="term" value="F:peptide deformylase activity"/>
    <property type="evidence" value="ECO:0007669"/>
    <property type="project" value="UniProtKB-UniRule"/>
</dbReference>
<dbReference type="GO" id="GO:0043686">
    <property type="term" value="P:co-translational protein modification"/>
    <property type="evidence" value="ECO:0007669"/>
    <property type="project" value="TreeGrafter"/>
</dbReference>
<dbReference type="GO" id="GO:0006412">
    <property type="term" value="P:translation"/>
    <property type="evidence" value="ECO:0007669"/>
    <property type="project" value="UniProtKB-UniRule"/>
</dbReference>
<dbReference type="CDD" id="cd00487">
    <property type="entry name" value="Pep_deformylase"/>
    <property type="match status" value="1"/>
</dbReference>
<dbReference type="FunFam" id="3.90.45.10:FF:000001">
    <property type="entry name" value="Peptide deformylase"/>
    <property type="match status" value="1"/>
</dbReference>
<dbReference type="Gene3D" id="3.90.45.10">
    <property type="entry name" value="Peptide deformylase"/>
    <property type="match status" value="1"/>
</dbReference>
<dbReference type="HAMAP" id="MF_00163">
    <property type="entry name" value="Pep_deformylase"/>
    <property type="match status" value="1"/>
</dbReference>
<dbReference type="InterPro" id="IPR023635">
    <property type="entry name" value="Peptide_deformylase"/>
</dbReference>
<dbReference type="InterPro" id="IPR036821">
    <property type="entry name" value="Peptide_deformylase_sf"/>
</dbReference>
<dbReference type="NCBIfam" id="TIGR00079">
    <property type="entry name" value="pept_deformyl"/>
    <property type="match status" value="1"/>
</dbReference>
<dbReference type="NCBIfam" id="NF001159">
    <property type="entry name" value="PRK00150.1-3"/>
    <property type="match status" value="1"/>
</dbReference>
<dbReference type="PANTHER" id="PTHR10458">
    <property type="entry name" value="PEPTIDE DEFORMYLASE"/>
    <property type="match status" value="1"/>
</dbReference>
<dbReference type="PANTHER" id="PTHR10458:SF21">
    <property type="entry name" value="PEPTIDE DEFORMYLASE"/>
    <property type="match status" value="1"/>
</dbReference>
<dbReference type="Pfam" id="PF01327">
    <property type="entry name" value="Pep_deformylase"/>
    <property type="match status" value="1"/>
</dbReference>
<dbReference type="PIRSF" id="PIRSF004749">
    <property type="entry name" value="Pep_def"/>
    <property type="match status" value="1"/>
</dbReference>
<dbReference type="PRINTS" id="PR01576">
    <property type="entry name" value="PDEFORMYLASE"/>
</dbReference>
<dbReference type="SUPFAM" id="SSF56420">
    <property type="entry name" value="Peptide deformylase"/>
    <property type="match status" value="1"/>
</dbReference>
<sequence length="169" mass="19328">MSVLQVLHIPDERLRKVAKPVEEVNAEIQRIVDDMFETMYAEEGIGLAATQVDIHQRIIVIDVSENRDERLVLINPELLEKSGETGIEEGCLSIPEQRALVPRAEKVKIRALDRDGKPFELEADGLLAICIQHEMDHLVGKLFMDYLSPLKQQRIRQKVEKLDRLKARA</sequence>
<proteinExistence type="inferred from homology"/>
<evidence type="ECO:0000255" key="1">
    <source>
        <dbReference type="HAMAP-Rule" id="MF_00163"/>
    </source>
</evidence>
<reference key="1">
    <citation type="journal article" date="2009" name="PLoS Genet.">
        <title>Organised genome dynamics in the Escherichia coli species results in highly diverse adaptive paths.</title>
        <authorList>
            <person name="Touchon M."/>
            <person name="Hoede C."/>
            <person name="Tenaillon O."/>
            <person name="Barbe V."/>
            <person name="Baeriswyl S."/>
            <person name="Bidet P."/>
            <person name="Bingen E."/>
            <person name="Bonacorsi S."/>
            <person name="Bouchier C."/>
            <person name="Bouvet O."/>
            <person name="Calteau A."/>
            <person name="Chiapello H."/>
            <person name="Clermont O."/>
            <person name="Cruveiller S."/>
            <person name="Danchin A."/>
            <person name="Diard M."/>
            <person name="Dossat C."/>
            <person name="Karoui M.E."/>
            <person name="Frapy E."/>
            <person name="Garry L."/>
            <person name="Ghigo J.M."/>
            <person name="Gilles A.M."/>
            <person name="Johnson J."/>
            <person name="Le Bouguenec C."/>
            <person name="Lescat M."/>
            <person name="Mangenot S."/>
            <person name="Martinez-Jehanne V."/>
            <person name="Matic I."/>
            <person name="Nassif X."/>
            <person name="Oztas S."/>
            <person name="Petit M.A."/>
            <person name="Pichon C."/>
            <person name="Rouy Z."/>
            <person name="Ruf C.S."/>
            <person name="Schneider D."/>
            <person name="Tourret J."/>
            <person name="Vacherie B."/>
            <person name="Vallenet D."/>
            <person name="Medigue C."/>
            <person name="Rocha E.P.C."/>
            <person name="Denamur E."/>
        </authorList>
    </citation>
    <scope>NUCLEOTIDE SEQUENCE [LARGE SCALE GENOMIC DNA]</scope>
    <source>
        <strain>IAI1</strain>
    </source>
</reference>